<sequence>MLRYAIIFFVIAIIAAVFGFGGIAAGAAEIAKILFYIFVVIFLVTLLLGVVRR</sequence>
<protein>
    <recommendedName>
        <fullName evidence="1">UPF0391 membrane protein Bcep1808_5731</fullName>
    </recommendedName>
</protein>
<comment type="subcellular location">
    <subcellularLocation>
        <location evidence="1">Cell membrane</location>
        <topology evidence="1">Multi-pass membrane protein</topology>
    </subcellularLocation>
</comment>
<comment type="similarity">
    <text evidence="1">Belongs to the UPF0391 family.</text>
</comment>
<name>Y5731_BURVG</name>
<reference key="1">
    <citation type="submission" date="2007-03" db="EMBL/GenBank/DDBJ databases">
        <title>Complete sequence of chromosome 3 of Burkholderia vietnamiensis G4.</title>
        <authorList>
            <consortium name="US DOE Joint Genome Institute"/>
            <person name="Copeland A."/>
            <person name="Lucas S."/>
            <person name="Lapidus A."/>
            <person name="Barry K."/>
            <person name="Detter J.C."/>
            <person name="Glavina del Rio T."/>
            <person name="Hammon N."/>
            <person name="Israni S."/>
            <person name="Dalin E."/>
            <person name="Tice H."/>
            <person name="Pitluck S."/>
            <person name="Chain P."/>
            <person name="Malfatti S."/>
            <person name="Shin M."/>
            <person name="Vergez L."/>
            <person name="Schmutz J."/>
            <person name="Larimer F."/>
            <person name="Land M."/>
            <person name="Hauser L."/>
            <person name="Kyrpides N."/>
            <person name="Tiedje J."/>
            <person name="Richardson P."/>
        </authorList>
    </citation>
    <scope>NUCLEOTIDE SEQUENCE [LARGE SCALE GENOMIC DNA]</scope>
    <source>
        <strain>G4 / LMG 22486</strain>
    </source>
</reference>
<organism>
    <name type="scientific">Burkholderia vietnamiensis (strain G4 / LMG 22486)</name>
    <name type="common">Burkholderia cepacia (strain R1808)</name>
    <dbReference type="NCBI Taxonomy" id="269482"/>
    <lineage>
        <taxon>Bacteria</taxon>
        <taxon>Pseudomonadati</taxon>
        <taxon>Pseudomonadota</taxon>
        <taxon>Betaproteobacteria</taxon>
        <taxon>Burkholderiales</taxon>
        <taxon>Burkholderiaceae</taxon>
        <taxon>Burkholderia</taxon>
        <taxon>Burkholderia cepacia complex</taxon>
    </lineage>
</organism>
<keyword id="KW-1003">Cell membrane</keyword>
<keyword id="KW-0472">Membrane</keyword>
<keyword id="KW-0812">Transmembrane</keyword>
<keyword id="KW-1133">Transmembrane helix</keyword>
<evidence type="ECO:0000255" key="1">
    <source>
        <dbReference type="HAMAP-Rule" id="MF_01361"/>
    </source>
</evidence>
<gene>
    <name type="ordered locus">Bcep1808_5731</name>
</gene>
<accession>A4JQW5</accession>
<feature type="chain" id="PRO_0000314222" description="UPF0391 membrane protein Bcep1808_5731">
    <location>
        <begin position="1"/>
        <end position="53"/>
    </location>
</feature>
<feature type="transmembrane region" description="Helical" evidence="1">
    <location>
        <begin position="5"/>
        <end position="25"/>
    </location>
</feature>
<feature type="transmembrane region" description="Helical" evidence="1">
    <location>
        <begin position="30"/>
        <end position="50"/>
    </location>
</feature>
<proteinExistence type="inferred from homology"/>
<dbReference type="EMBL" id="CP000616">
    <property type="protein sequence ID" value="ABO58668.1"/>
    <property type="molecule type" value="Genomic_DNA"/>
</dbReference>
<dbReference type="SMR" id="A4JQW5"/>
<dbReference type="KEGG" id="bvi:Bcep1808_5731"/>
<dbReference type="eggNOG" id="COG5487">
    <property type="taxonomic scope" value="Bacteria"/>
</dbReference>
<dbReference type="HOGENOM" id="CLU_187346_0_1_4"/>
<dbReference type="Proteomes" id="UP000002287">
    <property type="component" value="Chromosome 3"/>
</dbReference>
<dbReference type="GO" id="GO:0005886">
    <property type="term" value="C:plasma membrane"/>
    <property type="evidence" value="ECO:0007669"/>
    <property type="project" value="UniProtKB-SubCell"/>
</dbReference>
<dbReference type="HAMAP" id="MF_01361">
    <property type="entry name" value="UPF0391"/>
    <property type="match status" value="1"/>
</dbReference>
<dbReference type="InterPro" id="IPR009760">
    <property type="entry name" value="DUF1328"/>
</dbReference>
<dbReference type="NCBIfam" id="NF010226">
    <property type="entry name" value="PRK13682.1-1"/>
    <property type="match status" value="1"/>
</dbReference>
<dbReference type="NCBIfam" id="NF010229">
    <property type="entry name" value="PRK13682.1-4"/>
    <property type="match status" value="1"/>
</dbReference>
<dbReference type="Pfam" id="PF07043">
    <property type="entry name" value="DUF1328"/>
    <property type="match status" value="1"/>
</dbReference>
<dbReference type="PIRSF" id="PIRSF036466">
    <property type="entry name" value="UCP036466"/>
    <property type="match status" value="1"/>
</dbReference>